<organism>
    <name type="scientific">Salmonella schwarzengrund (strain CVM19633)</name>
    <dbReference type="NCBI Taxonomy" id="439843"/>
    <lineage>
        <taxon>Bacteria</taxon>
        <taxon>Pseudomonadati</taxon>
        <taxon>Pseudomonadota</taxon>
        <taxon>Gammaproteobacteria</taxon>
        <taxon>Enterobacterales</taxon>
        <taxon>Enterobacteriaceae</taxon>
        <taxon>Salmonella</taxon>
    </lineage>
</organism>
<evidence type="ECO:0000255" key="1">
    <source>
        <dbReference type="HAMAP-Rule" id="MF_00285"/>
    </source>
</evidence>
<comment type="function">
    <text evidence="1">Part of the high-affinity ATP-driven potassium transport (or Kdp) system, which catalyzes the hydrolysis of ATP coupled with the electrogenic transport of potassium into the cytoplasm. This subunit is responsible for energy coupling to the transport system and for the release of the potassium ions to the cytoplasm.</text>
</comment>
<comment type="catalytic activity">
    <reaction evidence="1">
        <text>K(+)(out) + ATP + H2O = K(+)(in) + ADP + phosphate + H(+)</text>
        <dbReference type="Rhea" id="RHEA:16777"/>
        <dbReference type="ChEBI" id="CHEBI:15377"/>
        <dbReference type="ChEBI" id="CHEBI:15378"/>
        <dbReference type="ChEBI" id="CHEBI:29103"/>
        <dbReference type="ChEBI" id="CHEBI:30616"/>
        <dbReference type="ChEBI" id="CHEBI:43474"/>
        <dbReference type="ChEBI" id="CHEBI:456216"/>
        <dbReference type="EC" id="7.2.2.6"/>
    </reaction>
    <physiologicalReaction direction="left-to-right" evidence="1">
        <dbReference type="Rhea" id="RHEA:16778"/>
    </physiologicalReaction>
</comment>
<comment type="subunit">
    <text evidence="1">The system is composed of three essential subunits: KdpA, KdpB and KdpC.</text>
</comment>
<comment type="subcellular location">
    <subcellularLocation>
        <location evidence="1">Cell inner membrane</location>
        <topology evidence="1">Multi-pass membrane protein</topology>
    </subcellularLocation>
</comment>
<comment type="similarity">
    <text evidence="1">Belongs to the cation transport ATPase (P-type) (TC 3.A.3) family. Type IA subfamily.</text>
</comment>
<reference key="1">
    <citation type="journal article" date="2011" name="J. Bacteriol.">
        <title>Comparative genomics of 28 Salmonella enterica isolates: evidence for CRISPR-mediated adaptive sublineage evolution.</title>
        <authorList>
            <person name="Fricke W.F."/>
            <person name="Mammel M.K."/>
            <person name="McDermott P.F."/>
            <person name="Tartera C."/>
            <person name="White D.G."/>
            <person name="Leclerc J.E."/>
            <person name="Ravel J."/>
            <person name="Cebula T.A."/>
        </authorList>
    </citation>
    <scope>NUCLEOTIDE SEQUENCE [LARGE SCALE GENOMIC DNA]</scope>
    <source>
        <strain>CVM19633</strain>
    </source>
</reference>
<sequence length="682" mass="72176">MSRKQLALFEPVLLVQALTDAVKKLSPRAQWRNPVMFVVWAGSVLTTLLTLAMVTGQITGSALFTGVISLWLWFTVLFANFAEALAEGRSKAQANSLKGVKKTAFARRLRAPRHDAQADNVPAAELRKGDIVLVKAGDIIPCDGEVIEGGASVDESAITGESAPVIRESGGDFASVTGGTRILSDWLVIACSVNPGETFLDRMIAMVEGAQRRKTPNEIALTILLIALTIVFLLATATLWPFSAWGGNAVSVTVLVALLVCLIPTTIGGLLSAIGVAGMSRMLGANVIATSGRAVEAAGDVDVLLLDKTGTITLGNRQASDFIPARGVDERTLADAAQLASLADETPEGRSIVILAKQRFNLRERDVQSLHATFVPFTAQSRMSGINIDNRMIRKGSVDAIRRHVESNGGHFPADVEQNVENVARLGATPLVVVEGARVLGVIALKDIVKGGIKERFAQLRKMGIKTVMITGDNRLTAAAIAAEAGVDDFLAEATPEAKLALIRQYQAEGRLVAMTGDGTNDAPALAQADVAVAMNSGTQAAKEAGNMVDLDSNPTKLIEVVHIGKQMLMTRGSLTTFSIANDVAKYFAIIPAAFAATYPQLNALNVMGLHSPNSAILSAVIFNALIIIFLIPLALKGVSYKPLSASAMLRRNLWIYGLGGLVVPFIGIKVIDVLLTLLGLA</sequence>
<protein>
    <recommendedName>
        <fullName evidence="1">Potassium-transporting ATPase ATP-binding subunit</fullName>
        <ecNumber evidence="1">7.2.2.6</ecNumber>
    </recommendedName>
    <alternativeName>
        <fullName evidence="1">ATP phosphohydrolase [potassium-transporting] B chain</fullName>
    </alternativeName>
    <alternativeName>
        <fullName evidence="1">Potassium-binding and translocating subunit B</fullName>
    </alternativeName>
    <alternativeName>
        <fullName evidence="1">Potassium-translocating ATPase B chain</fullName>
    </alternativeName>
</protein>
<dbReference type="EC" id="7.2.2.6" evidence="1"/>
<dbReference type="EMBL" id="CP001127">
    <property type="protein sequence ID" value="ACF88859.1"/>
    <property type="molecule type" value="Genomic_DNA"/>
</dbReference>
<dbReference type="RefSeq" id="WP_000088039.1">
    <property type="nucleotide sequence ID" value="NC_011094.1"/>
</dbReference>
<dbReference type="SMR" id="B4TQ22"/>
<dbReference type="KEGG" id="sew:SeSA_A0863"/>
<dbReference type="HOGENOM" id="CLU_025728_2_0_6"/>
<dbReference type="Proteomes" id="UP000001865">
    <property type="component" value="Chromosome"/>
</dbReference>
<dbReference type="GO" id="GO:0005886">
    <property type="term" value="C:plasma membrane"/>
    <property type="evidence" value="ECO:0007669"/>
    <property type="project" value="UniProtKB-SubCell"/>
</dbReference>
<dbReference type="GO" id="GO:0005524">
    <property type="term" value="F:ATP binding"/>
    <property type="evidence" value="ECO:0007669"/>
    <property type="project" value="UniProtKB-UniRule"/>
</dbReference>
<dbReference type="GO" id="GO:0016887">
    <property type="term" value="F:ATP hydrolysis activity"/>
    <property type="evidence" value="ECO:0007669"/>
    <property type="project" value="InterPro"/>
</dbReference>
<dbReference type="GO" id="GO:0000287">
    <property type="term" value="F:magnesium ion binding"/>
    <property type="evidence" value="ECO:0007669"/>
    <property type="project" value="UniProtKB-UniRule"/>
</dbReference>
<dbReference type="GO" id="GO:0008556">
    <property type="term" value="F:P-type potassium transmembrane transporter activity"/>
    <property type="evidence" value="ECO:0007669"/>
    <property type="project" value="UniProtKB-UniRule"/>
</dbReference>
<dbReference type="CDD" id="cd02078">
    <property type="entry name" value="P-type_ATPase_K"/>
    <property type="match status" value="1"/>
</dbReference>
<dbReference type="FunFam" id="2.70.150.10:FF:000010">
    <property type="entry name" value="Potassium-transporting ATPase ATP-binding subunit"/>
    <property type="match status" value="1"/>
</dbReference>
<dbReference type="FunFam" id="3.40.1110.10:FF:000007">
    <property type="entry name" value="Potassium-transporting ATPase ATP-binding subunit"/>
    <property type="match status" value="1"/>
</dbReference>
<dbReference type="Gene3D" id="3.40.1110.10">
    <property type="entry name" value="Calcium-transporting ATPase, cytoplasmic domain N"/>
    <property type="match status" value="1"/>
</dbReference>
<dbReference type="Gene3D" id="2.70.150.10">
    <property type="entry name" value="Calcium-transporting ATPase, cytoplasmic transduction domain A"/>
    <property type="match status" value="1"/>
</dbReference>
<dbReference type="Gene3D" id="3.40.50.1000">
    <property type="entry name" value="HAD superfamily/HAD-like"/>
    <property type="match status" value="1"/>
</dbReference>
<dbReference type="HAMAP" id="MF_00285">
    <property type="entry name" value="KdpB"/>
    <property type="match status" value="1"/>
</dbReference>
<dbReference type="InterPro" id="IPR023299">
    <property type="entry name" value="ATPase_P-typ_cyto_dom_N"/>
</dbReference>
<dbReference type="InterPro" id="IPR018303">
    <property type="entry name" value="ATPase_P-typ_P_site"/>
</dbReference>
<dbReference type="InterPro" id="IPR023298">
    <property type="entry name" value="ATPase_P-typ_TM_dom_sf"/>
</dbReference>
<dbReference type="InterPro" id="IPR008250">
    <property type="entry name" value="ATPase_P-typ_transduc_dom_A_sf"/>
</dbReference>
<dbReference type="InterPro" id="IPR036412">
    <property type="entry name" value="HAD-like_sf"/>
</dbReference>
<dbReference type="InterPro" id="IPR023214">
    <property type="entry name" value="HAD_sf"/>
</dbReference>
<dbReference type="InterPro" id="IPR006391">
    <property type="entry name" value="P-type_ATPase_bsu_IA"/>
</dbReference>
<dbReference type="InterPro" id="IPR001757">
    <property type="entry name" value="P_typ_ATPase"/>
</dbReference>
<dbReference type="InterPro" id="IPR044492">
    <property type="entry name" value="P_typ_ATPase_HD_dom"/>
</dbReference>
<dbReference type="NCBIfam" id="TIGR01494">
    <property type="entry name" value="ATPase_P-type"/>
    <property type="match status" value="2"/>
</dbReference>
<dbReference type="NCBIfam" id="TIGR01497">
    <property type="entry name" value="kdpB"/>
    <property type="match status" value="1"/>
</dbReference>
<dbReference type="PANTHER" id="PTHR43743">
    <property type="entry name" value="POTASSIUM-TRANSPORTING ATPASE ATP-BINDING SUBUNIT"/>
    <property type="match status" value="1"/>
</dbReference>
<dbReference type="PANTHER" id="PTHR43743:SF1">
    <property type="entry name" value="POTASSIUM-TRANSPORTING ATPASE ATP-BINDING SUBUNIT"/>
    <property type="match status" value="1"/>
</dbReference>
<dbReference type="Pfam" id="PF00122">
    <property type="entry name" value="E1-E2_ATPase"/>
    <property type="match status" value="1"/>
</dbReference>
<dbReference type="Pfam" id="PF00702">
    <property type="entry name" value="Hydrolase"/>
    <property type="match status" value="1"/>
</dbReference>
<dbReference type="PRINTS" id="PR00119">
    <property type="entry name" value="CATATPASE"/>
</dbReference>
<dbReference type="SFLD" id="SFLDS00003">
    <property type="entry name" value="Haloacid_Dehalogenase"/>
    <property type="match status" value="1"/>
</dbReference>
<dbReference type="SFLD" id="SFLDF00027">
    <property type="entry name" value="p-type_atpase"/>
    <property type="match status" value="1"/>
</dbReference>
<dbReference type="SUPFAM" id="SSF81653">
    <property type="entry name" value="Calcium ATPase, transduction domain A"/>
    <property type="match status" value="1"/>
</dbReference>
<dbReference type="SUPFAM" id="SSF81665">
    <property type="entry name" value="Calcium ATPase, transmembrane domain M"/>
    <property type="match status" value="1"/>
</dbReference>
<dbReference type="SUPFAM" id="SSF56784">
    <property type="entry name" value="HAD-like"/>
    <property type="match status" value="1"/>
</dbReference>
<dbReference type="SUPFAM" id="SSF81660">
    <property type="entry name" value="Metal cation-transporting ATPase, ATP-binding domain N"/>
    <property type="match status" value="1"/>
</dbReference>
<dbReference type="PROSITE" id="PS00154">
    <property type="entry name" value="ATPASE_E1_E2"/>
    <property type="match status" value="1"/>
</dbReference>
<proteinExistence type="inferred from homology"/>
<keyword id="KW-0067">ATP-binding</keyword>
<keyword id="KW-0997">Cell inner membrane</keyword>
<keyword id="KW-1003">Cell membrane</keyword>
<keyword id="KW-0406">Ion transport</keyword>
<keyword id="KW-0460">Magnesium</keyword>
<keyword id="KW-0472">Membrane</keyword>
<keyword id="KW-0479">Metal-binding</keyword>
<keyword id="KW-0547">Nucleotide-binding</keyword>
<keyword id="KW-0597">Phosphoprotein</keyword>
<keyword id="KW-0630">Potassium</keyword>
<keyword id="KW-0633">Potassium transport</keyword>
<keyword id="KW-1278">Translocase</keyword>
<keyword id="KW-0812">Transmembrane</keyword>
<keyword id="KW-1133">Transmembrane helix</keyword>
<keyword id="KW-0813">Transport</keyword>
<name>KDPB_SALSV</name>
<accession>B4TQ22</accession>
<feature type="chain" id="PRO_1000114964" description="Potassium-transporting ATPase ATP-binding subunit">
    <location>
        <begin position="1"/>
        <end position="682"/>
    </location>
</feature>
<feature type="transmembrane region" description="Helical" evidence="1">
    <location>
        <begin position="34"/>
        <end position="54"/>
    </location>
</feature>
<feature type="transmembrane region" description="Helical" evidence="1">
    <location>
        <begin position="62"/>
        <end position="82"/>
    </location>
</feature>
<feature type="transmembrane region" description="Helical" evidence="1">
    <location>
        <begin position="219"/>
        <end position="239"/>
    </location>
</feature>
<feature type="transmembrane region" description="Helical" evidence="1">
    <location>
        <begin position="254"/>
        <end position="274"/>
    </location>
</feature>
<feature type="transmembrane region" description="Helical" evidence="1">
    <location>
        <begin position="588"/>
        <end position="608"/>
    </location>
</feature>
<feature type="transmembrane region" description="Helical" evidence="1">
    <location>
        <begin position="616"/>
        <end position="636"/>
    </location>
</feature>
<feature type="transmembrane region" description="Helical" evidence="1">
    <location>
        <begin position="662"/>
        <end position="682"/>
    </location>
</feature>
<feature type="active site" description="4-aspartylphosphate intermediate" evidence="1">
    <location>
        <position position="307"/>
    </location>
</feature>
<feature type="binding site" evidence="1">
    <location>
        <position position="344"/>
    </location>
    <ligand>
        <name>ATP</name>
        <dbReference type="ChEBI" id="CHEBI:30616"/>
    </ligand>
</feature>
<feature type="binding site" evidence="1">
    <location>
        <position position="348"/>
    </location>
    <ligand>
        <name>ATP</name>
        <dbReference type="ChEBI" id="CHEBI:30616"/>
    </ligand>
</feature>
<feature type="binding site" evidence="1">
    <location>
        <begin position="377"/>
        <end position="384"/>
    </location>
    <ligand>
        <name>ATP</name>
        <dbReference type="ChEBI" id="CHEBI:30616"/>
    </ligand>
</feature>
<feature type="binding site" evidence="1">
    <location>
        <position position="395"/>
    </location>
    <ligand>
        <name>ATP</name>
        <dbReference type="ChEBI" id="CHEBI:30616"/>
    </ligand>
</feature>
<feature type="binding site" evidence="1">
    <location>
        <position position="518"/>
    </location>
    <ligand>
        <name>Mg(2+)</name>
        <dbReference type="ChEBI" id="CHEBI:18420"/>
    </ligand>
</feature>
<feature type="binding site" evidence="1">
    <location>
        <position position="522"/>
    </location>
    <ligand>
        <name>Mg(2+)</name>
        <dbReference type="ChEBI" id="CHEBI:18420"/>
    </ligand>
</feature>
<gene>
    <name evidence="1" type="primary">kdpB</name>
    <name type="ordered locus">SeSA_A0863</name>
</gene>